<reference key="1">
    <citation type="journal article" date="2005" name="J. Bacteriol.">
        <title>Whole-genome sequence analysis of Pseudomonas syringae pv. phaseolicola 1448A reveals divergence among pathovars in genes involved in virulence and transposition.</title>
        <authorList>
            <person name="Joardar V."/>
            <person name="Lindeberg M."/>
            <person name="Jackson R.W."/>
            <person name="Selengut J."/>
            <person name="Dodson R."/>
            <person name="Brinkac L.M."/>
            <person name="Daugherty S.C."/>
            <person name="DeBoy R.T."/>
            <person name="Durkin A.S."/>
            <person name="Gwinn Giglio M."/>
            <person name="Madupu R."/>
            <person name="Nelson W.C."/>
            <person name="Rosovitz M.J."/>
            <person name="Sullivan S.A."/>
            <person name="Crabtree J."/>
            <person name="Creasy T."/>
            <person name="Davidsen T.M."/>
            <person name="Haft D.H."/>
            <person name="Zafar N."/>
            <person name="Zhou L."/>
            <person name="Halpin R."/>
            <person name="Holley T."/>
            <person name="Khouri H.M."/>
            <person name="Feldblyum T.V."/>
            <person name="White O."/>
            <person name="Fraser C.M."/>
            <person name="Chatterjee A.K."/>
            <person name="Cartinhour S."/>
            <person name="Schneider D."/>
            <person name="Mansfield J.W."/>
            <person name="Collmer A."/>
            <person name="Buell R."/>
        </authorList>
    </citation>
    <scope>NUCLEOTIDE SEQUENCE [LARGE SCALE GENOMIC DNA]</scope>
    <source>
        <strain>1448A / Race 6</strain>
    </source>
</reference>
<sequence length="197" mass="21442">MTAITITDAAHDYLADLLEKQNTPGIGIRVFITQPGTQYAETCIAYCKPGEEKPEDKAIGLKSFTAWIDGFSEAFLDDAVVDYATDRMGGQLTIKAPNAKVPMVNADSPINERINYYLQTEINPGLASHGGQVTLIDVVEEEAKNIAVLQFGGGCQGCGQADVTLKEGIERTLLERIPELSGVRDVTDHTQKENAYY</sequence>
<gene>
    <name evidence="1" type="primary">nfuA</name>
    <name type="ordered locus">PSPPH_2623</name>
</gene>
<feature type="chain" id="PRO_1000186757" description="Fe/S biogenesis protein NfuA">
    <location>
        <begin position="1"/>
        <end position="197"/>
    </location>
</feature>
<feature type="binding site" evidence="1">
    <location>
        <position position="155"/>
    </location>
    <ligand>
        <name>[4Fe-4S] cluster</name>
        <dbReference type="ChEBI" id="CHEBI:49883"/>
    </ligand>
</feature>
<feature type="binding site" evidence="1">
    <location>
        <position position="158"/>
    </location>
    <ligand>
        <name>[4Fe-4S] cluster</name>
        <dbReference type="ChEBI" id="CHEBI:49883"/>
    </ligand>
</feature>
<evidence type="ECO:0000255" key="1">
    <source>
        <dbReference type="HAMAP-Rule" id="MF_01637"/>
    </source>
</evidence>
<organism>
    <name type="scientific">Pseudomonas savastanoi pv. phaseolicola (strain 1448A / Race 6)</name>
    <name type="common">Pseudomonas syringae pv. phaseolicola (strain 1448A / Race 6)</name>
    <dbReference type="NCBI Taxonomy" id="264730"/>
    <lineage>
        <taxon>Bacteria</taxon>
        <taxon>Pseudomonadati</taxon>
        <taxon>Pseudomonadota</taxon>
        <taxon>Gammaproteobacteria</taxon>
        <taxon>Pseudomonadales</taxon>
        <taxon>Pseudomonadaceae</taxon>
        <taxon>Pseudomonas</taxon>
    </lineage>
</organism>
<accession>Q48IG5</accession>
<protein>
    <recommendedName>
        <fullName evidence="1">Fe/S biogenesis protein NfuA</fullName>
    </recommendedName>
</protein>
<comment type="function">
    <text evidence="1">Involved in iron-sulfur cluster biogenesis. Binds a 4Fe-4S cluster, can transfer this cluster to apoproteins, and thereby intervenes in the maturation of Fe/S proteins. Could also act as a scaffold/chaperone for damaged Fe/S proteins.</text>
</comment>
<comment type="cofactor">
    <cofactor evidence="1">
        <name>[4Fe-4S] cluster</name>
        <dbReference type="ChEBI" id="CHEBI:49883"/>
    </cofactor>
    <text evidence="1">Binds 1 [4Fe-4S] cluster per subunit. The cluster is presumably bound at the interface of two monomers.</text>
</comment>
<comment type="subunit">
    <text evidence="1">Homodimer.</text>
</comment>
<comment type="similarity">
    <text evidence="1">Belongs to the NfuA family.</text>
</comment>
<keyword id="KW-0004">4Fe-4S</keyword>
<keyword id="KW-0408">Iron</keyword>
<keyword id="KW-0411">Iron-sulfur</keyword>
<keyword id="KW-0479">Metal-binding</keyword>
<proteinExistence type="inferred from homology"/>
<name>NFUA_PSE14</name>
<dbReference type="EMBL" id="CP000058">
    <property type="protein sequence ID" value="AAZ32993.1"/>
    <property type="molecule type" value="Genomic_DNA"/>
</dbReference>
<dbReference type="RefSeq" id="WP_002553665.1">
    <property type="nucleotide sequence ID" value="NC_005773.3"/>
</dbReference>
<dbReference type="SMR" id="Q48IG5"/>
<dbReference type="GeneID" id="77278303"/>
<dbReference type="KEGG" id="psp:PSPPH_2623"/>
<dbReference type="eggNOG" id="COG0316">
    <property type="taxonomic scope" value="Bacteria"/>
</dbReference>
<dbReference type="eggNOG" id="COG0694">
    <property type="taxonomic scope" value="Bacteria"/>
</dbReference>
<dbReference type="HOGENOM" id="CLU_094569_0_0_6"/>
<dbReference type="Proteomes" id="UP000000551">
    <property type="component" value="Chromosome"/>
</dbReference>
<dbReference type="GO" id="GO:0051539">
    <property type="term" value="F:4 iron, 4 sulfur cluster binding"/>
    <property type="evidence" value="ECO:0007669"/>
    <property type="project" value="UniProtKB-UniRule"/>
</dbReference>
<dbReference type="GO" id="GO:0005506">
    <property type="term" value="F:iron ion binding"/>
    <property type="evidence" value="ECO:0007669"/>
    <property type="project" value="InterPro"/>
</dbReference>
<dbReference type="GO" id="GO:0016226">
    <property type="term" value="P:iron-sulfur cluster assembly"/>
    <property type="evidence" value="ECO:0007669"/>
    <property type="project" value="UniProtKB-UniRule"/>
</dbReference>
<dbReference type="GO" id="GO:0051604">
    <property type="term" value="P:protein maturation"/>
    <property type="evidence" value="ECO:0007669"/>
    <property type="project" value="UniProtKB-UniRule"/>
</dbReference>
<dbReference type="Gene3D" id="3.30.300.130">
    <property type="entry name" value="Fe-S cluster assembly (FSCA)"/>
    <property type="match status" value="1"/>
</dbReference>
<dbReference type="Gene3D" id="2.60.300.12">
    <property type="entry name" value="HesB-like domain"/>
    <property type="match status" value="1"/>
</dbReference>
<dbReference type="HAMAP" id="MF_01637">
    <property type="entry name" value="Fe_S_biogen_NfuA"/>
    <property type="match status" value="1"/>
</dbReference>
<dbReference type="InterPro" id="IPR017726">
    <property type="entry name" value="Fe/S_biogenesis_protein_NfuA"/>
</dbReference>
<dbReference type="InterPro" id="IPR000361">
    <property type="entry name" value="FeS_biogenesis"/>
</dbReference>
<dbReference type="InterPro" id="IPR034904">
    <property type="entry name" value="FSCA_dom_sf"/>
</dbReference>
<dbReference type="InterPro" id="IPR035903">
    <property type="entry name" value="HesB-like_dom_sf"/>
</dbReference>
<dbReference type="InterPro" id="IPR001075">
    <property type="entry name" value="NIF_FeS_clus_asmbl_NifU_C"/>
</dbReference>
<dbReference type="NCBIfam" id="TIGR03341">
    <property type="entry name" value="YhgI_GntY"/>
    <property type="match status" value="1"/>
</dbReference>
<dbReference type="PANTHER" id="PTHR11178:SF51">
    <property type="entry name" value="FE_S BIOGENESIS PROTEIN NFUA"/>
    <property type="match status" value="1"/>
</dbReference>
<dbReference type="PANTHER" id="PTHR11178">
    <property type="entry name" value="IRON-SULFUR CLUSTER SCAFFOLD PROTEIN NFU-RELATED"/>
    <property type="match status" value="1"/>
</dbReference>
<dbReference type="Pfam" id="PF01521">
    <property type="entry name" value="Fe-S_biosyn"/>
    <property type="match status" value="1"/>
</dbReference>
<dbReference type="Pfam" id="PF01106">
    <property type="entry name" value="NifU"/>
    <property type="match status" value="1"/>
</dbReference>
<dbReference type="SUPFAM" id="SSF117916">
    <property type="entry name" value="Fe-S cluster assembly (FSCA) domain-like"/>
    <property type="match status" value="1"/>
</dbReference>
<dbReference type="SUPFAM" id="SSF89360">
    <property type="entry name" value="HesB-like domain"/>
    <property type="match status" value="1"/>
</dbReference>